<sequence>MGSEALAYALRLLARKGYSRAALRAKLAARFGEAEAEAALGRLEAMGYLDDRAYARAFVETRARRYGPRKLRALLLARGVPEEVVEEVLPEARVEEALAVLRRYRHREDKARAVRFLEGRGFPLGVALEAWRLAQEEGEGYK</sequence>
<keyword id="KW-0963">Cytoplasm</keyword>
<accession>Q72K66</accession>
<protein>
    <recommendedName>
        <fullName evidence="1">Regulatory protein RecX</fullName>
    </recommendedName>
</protein>
<organism>
    <name type="scientific">Thermus thermophilus (strain ATCC BAA-163 / DSM 7039 / HB27)</name>
    <dbReference type="NCBI Taxonomy" id="262724"/>
    <lineage>
        <taxon>Bacteria</taxon>
        <taxon>Thermotogati</taxon>
        <taxon>Deinococcota</taxon>
        <taxon>Deinococci</taxon>
        <taxon>Thermales</taxon>
        <taxon>Thermaceae</taxon>
        <taxon>Thermus</taxon>
    </lineage>
</organism>
<dbReference type="EMBL" id="AE017221">
    <property type="protein sequence ID" value="AAS80844.1"/>
    <property type="molecule type" value="Genomic_DNA"/>
</dbReference>
<dbReference type="RefSeq" id="WP_011172942.1">
    <property type="nucleotide sequence ID" value="NC_005835.1"/>
</dbReference>
<dbReference type="SMR" id="Q72K66"/>
<dbReference type="KEGG" id="tth:TT_C0496"/>
<dbReference type="eggNOG" id="COG2137">
    <property type="taxonomic scope" value="Bacteria"/>
</dbReference>
<dbReference type="HOGENOM" id="CLU_066607_3_3_0"/>
<dbReference type="OrthoDB" id="26279at2"/>
<dbReference type="Proteomes" id="UP000000592">
    <property type="component" value="Chromosome"/>
</dbReference>
<dbReference type="GO" id="GO:0005737">
    <property type="term" value="C:cytoplasm"/>
    <property type="evidence" value="ECO:0007669"/>
    <property type="project" value="UniProtKB-SubCell"/>
</dbReference>
<dbReference type="GO" id="GO:0006282">
    <property type="term" value="P:regulation of DNA repair"/>
    <property type="evidence" value="ECO:0007669"/>
    <property type="project" value="UniProtKB-UniRule"/>
</dbReference>
<dbReference type="Gene3D" id="1.10.10.10">
    <property type="entry name" value="Winged helix-like DNA-binding domain superfamily/Winged helix DNA-binding domain"/>
    <property type="match status" value="2"/>
</dbReference>
<dbReference type="HAMAP" id="MF_01114">
    <property type="entry name" value="RecX"/>
    <property type="match status" value="1"/>
</dbReference>
<dbReference type="InterPro" id="IPR053926">
    <property type="entry name" value="RecX_HTH_1st"/>
</dbReference>
<dbReference type="InterPro" id="IPR053924">
    <property type="entry name" value="RecX_HTH_2nd"/>
</dbReference>
<dbReference type="InterPro" id="IPR003783">
    <property type="entry name" value="Regulatory_RecX"/>
</dbReference>
<dbReference type="InterPro" id="IPR036388">
    <property type="entry name" value="WH-like_DNA-bd_sf"/>
</dbReference>
<dbReference type="NCBIfam" id="NF001065">
    <property type="entry name" value="PRK00117.5-5"/>
    <property type="match status" value="1"/>
</dbReference>
<dbReference type="PANTHER" id="PTHR33602">
    <property type="entry name" value="REGULATORY PROTEIN RECX FAMILY PROTEIN"/>
    <property type="match status" value="1"/>
</dbReference>
<dbReference type="PANTHER" id="PTHR33602:SF1">
    <property type="entry name" value="REGULATORY PROTEIN RECX FAMILY PROTEIN"/>
    <property type="match status" value="1"/>
</dbReference>
<dbReference type="Pfam" id="PF21982">
    <property type="entry name" value="RecX_HTH1"/>
    <property type="match status" value="1"/>
</dbReference>
<dbReference type="Pfam" id="PF02631">
    <property type="entry name" value="RecX_HTH2"/>
    <property type="match status" value="1"/>
</dbReference>
<proteinExistence type="inferred from homology"/>
<evidence type="ECO:0000255" key="1">
    <source>
        <dbReference type="HAMAP-Rule" id="MF_01114"/>
    </source>
</evidence>
<feature type="chain" id="PRO_1000065228" description="Regulatory protein RecX">
    <location>
        <begin position="1"/>
        <end position="142"/>
    </location>
</feature>
<name>RECX_THET2</name>
<gene>
    <name evidence="1" type="primary">recX</name>
    <name type="ordered locus">TT_C0496</name>
</gene>
<comment type="function">
    <text evidence="1">Modulates RecA activity.</text>
</comment>
<comment type="subcellular location">
    <subcellularLocation>
        <location evidence="1">Cytoplasm</location>
    </subcellularLocation>
</comment>
<comment type="similarity">
    <text evidence="1">Belongs to the RecX family.</text>
</comment>
<reference key="1">
    <citation type="journal article" date="2004" name="Nat. Biotechnol.">
        <title>The genome sequence of the extreme thermophile Thermus thermophilus.</title>
        <authorList>
            <person name="Henne A."/>
            <person name="Brueggemann H."/>
            <person name="Raasch C."/>
            <person name="Wiezer A."/>
            <person name="Hartsch T."/>
            <person name="Liesegang H."/>
            <person name="Johann A."/>
            <person name="Lienard T."/>
            <person name="Gohl O."/>
            <person name="Martinez-Arias R."/>
            <person name="Jacobi C."/>
            <person name="Starkuviene V."/>
            <person name="Schlenczeck S."/>
            <person name="Dencker S."/>
            <person name="Huber R."/>
            <person name="Klenk H.-P."/>
            <person name="Kramer W."/>
            <person name="Merkl R."/>
            <person name="Gottschalk G."/>
            <person name="Fritz H.-J."/>
        </authorList>
    </citation>
    <scope>NUCLEOTIDE SEQUENCE [LARGE SCALE GENOMIC DNA]</scope>
    <source>
        <strain>ATCC BAA-163 / DSM 7039 / HB27</strain>
    </source>
</reference>